<comment type="subcellular location">
    <subcellularLocation>
        <location evidence="2">Vacuole membrane</location>
        <topology evidence="2">Multi-pass membrane protein</topology>
    </subcellularLocation>
</comment>
<comment type="similarity">
    <text evidence="3">Belongs to the UPF0494 family.</text>
</comment>
<reference key="1">
    <citation type="journal article" date="2002" name="Nature">
        <title>The genome sequence of Schizosaccharomyces pombe.</title>
        <authorList>
            <person name="Wood V."/>
            <person name="Gwilliam R."/>
            <person name="Rajandream M.A."/>
            <person name="Lyne M.H."/>
            <person name="Lyne R."/>
            <person name="Stewart A."/>
            <person name="Sgouros J.G."/>
            <person name="Peat N."/>
            <person name="Hayles J."/>
            <person name="Baker S.G."/>
            <person name="Basham D."/>
            <person name="Bowman S."/>
            <person name="Brooks K."/>
            <person name="Brown D."/>
            <person name="Brown S."/>
            <person name="Chillingworth T."/>
            <person name="Churcher C.M."/>
            <person name="Collins M."/>
            <person name="Connor R."/>
            <person name="Cronin A."/>
            <person name="Davis P."/>
            <person name="Feltwell T."/>
            <person name="Fraser A."/>
            <person name="Gentles S."/>
            <person name="Goble A."/>
            <person name="Hamlin N."/>
            <person name="Harris D.E."/>
            <person name="Hidalgo J."/>
            <person name="Hodgson G."/>
            <person name="Holroyd S."/>
            <person name="Hornsby T."/>
            <person name="Howarth S."/>
            <person name="Huckle E.J."/>
            <person name="Hunt S."/>
            <person name="Jagels K."/>
            <person name="James K.D."/>
            <person name="Jones L."/>
            <person name="Jones M."/>
            <person name="Leather S."/>
            <person name="McDonald S."/>
            <person name="McLean J."/>
            <person name="Mooney P."/>
            <person name="Moule S."/>
            <person name="Mungall K.L."/>
            <person name="Murphy L.D."/>
            <person name="Niblett D."/>
            <person name="Odell C."/>
            <person name="Oliver K."/>
            <person name="O'Neil S."/>
            <person name="Pearson D."/>
            <person name="Quail M.A."/>
            <person name="Rabbinowitsch E."/>
            <person name="Rutherford K.M."/>
            <person name="Rutter S."/>
            <person name="Saunders D."/>
            <person name="Seeger K."/>
            <person name="Sharp S."/>
            <person name="Skelton J."/>
            <person name="Simmonds M.N."/>
            <person name="Squares R."/>
            <person name="Squares S."/>
            <person name="Stevens K."/>
            <person name="Taylor K."/>
            <person name="Taylor R.G."/>
            <person name="Tivey A."/>
            <person name="Walsh S.V."/>
            <person name="Warren T."/>
            <person name="Whitehead S."/>
            <person name="Woodward J.R."/>
            <person name="Volckaert G."/>
            <person name="Aert R."/>
            <person name="Robben J."/>
            <person name="Grymonprez B."/>
            <person name="Weltjens I."/>
            <person name="Vanstreels E."/>
            <person name="Rieger M."/>
            <person name="Schaefer M."/>
            <person name="Mueller-Auer S."/>
            <person name="Gabel C."/>
            <person name="Fuchs M."/>
            <person name="Duesterhoeft A."/>
            <person name="Fritzc C."/>
            <person name="Holzer E."/>
            <person name="Moestl D."/>
            <person name="Hilbert H."/>
            <person name="Borzym K."/>
            <person name="Langer I."/>
            <person name="Beck A."/>
            <person name="Lehrach H."/>
            <person name="Reinhardt R."/>
            <person name="Pohl T.M."/>
            <person name="Eger P."/>
            <person name="Zimmermann W."/>
            <person name="Wedler H."/>
            <person name="Wambutt R."/>
            <person name="Purnelle B."/>
            <person name="Goffeau A."/>
            <person name="Cadieu E."/>
            <person name="Dreano S."/>
            <person name="Gloux S."/>
            <person name="Lelaure V."/>
            <person name="Mottier S."/>
            <person name="Galibert F."/>
            <person name="Aves S.J."/>
            <person name="Xiang Z."/>
            <person name="Hunt C."/>
            <person name="Moore K."/>
            <person name="Hurst S.M."/>
            <person name="Lucas M."/>
            <person name="Rochet M."/>
            <person name="Gaillardin C."/>
            <person name="Tallada V.A."/>
            <person name="Garzon A."/>
            <person name="Thode G."/>
            <person name="Daga R.R."/>
            <person name="Cruzado L."/>
            <person name="Jimenez J."/>
            <person name="Sanchez M."/>
            <person name="del Rey F."/>
            <person name="Benito J."/>
            <person name="Dominguez A."/>
            <person name="Revuelta J.L."/>
            <person name="Moreno S."/>
            <person name="Armstrong J."/>
            <person name="Forsburg S.L."/>
            <person name="Cerutti L."/>
            <person name="Lowe T."/>
            <person name="McCombie W.R."/>
            <person name="Paulsen I."/>
            <person name="Potashkin J."/>
            <person name="Shpakovski G.V."/>
            <person name="Ussery D."/>
            <person name="Barrell B.G."/>
            <person name="Nurse P."/>
        </authorList>
    </citation>
    <scope>NUCLEOTIDE SEQUENCE [LARGE SCALE GENOMIC DNA]</scope>
    <source>
        <strain>972 / ATCC 24843</strain>
    </source>
</reference>
<reference key="2">
    <citation type="journal article" date="2006" name="Nat. Biotechnol.">
        <title>ORFeome cloning and global analysis of protein localization in the fission yeast Schizosaccharomyces pombe.</title>
        <authorList>
            <person name="Matsuyama A."/>
            <person name="Arai R."/>
            <person name="Yashiroda Y."/>
            <person name="Shirai A."/>
            <person name="Kamata A."/>
            <person name="Sekido S."/>
            <person name="Kobayashi Y."/>
            <person name="Hashimoto A."/>
            <person name="Hamamoto M."/>
            <person name="Hiraoka Y."/>
            <person name="Horinouchi S."/>
            <person name="Yoshida M."/>
        </authorList>
    </citation>
    <scope>SUBCELLULAR LOCATION [LARGE SCALE ANALYSIS]</scope>
</reference>
<proteinExistence type="inferred from homology"/>
<accession>P0CS86</accession>
<accession>Q9P3V9</accession>
<sequence>MSNPESLKKQVEPPGYNELFMVEDVCNVDLEQGLDLCKPEKVNKQSQRSRQSRQSLFTNTIKPQKDKMNIKTNKIKEFLNDLFTEFSKFHNSYYPDGRISTRSNFRWPLLIIWSIIIVFAVDKKFEVQKFLSIWINENRFYSEIWVPIAIYVCLLVLMLLSLIFFAEFAVLALRVTGVIIAVLGMIIAVLGMIIAALGATITGLLYFGHWALYKLVILSLGFKIVTPGDVCVSNTLPTHNGETALHSETTVGSDIEQIELQNMPTPVKK</sequence>
<keyword id="KW-0472">Membrane</keyword>
<keyword id="KW-1185">Reference proteome</keyword>
<keyword id="KW-0812">Transmembrane</keyword>
<keyword id="KW-1133">Transmembrane helix</keyword>
<keyword id="KW-0926">Vacuole</keyword>
<evidence type="ECO:0000255" key="1"/>
<evidence type="ECO:0000269" key="2">
    <source>
    </source>
</evidence>
<evidence type="ECO:0000305" key="3"/>
<feature type="chain" id="PRO_0000306279" description="UPF0494 membrane protein C1348.01">
    <location>
        <begin position="1"/>
        <end position="269"/>
    </location>
</feature>
<feature type="transmembrane region" description="Helical" evidence="1">
    <location>
        <begin position="107"/>
        <end position="127"/>
    </location>
</feature>
<feature type="transmembrane region" description="Helical" evidence="1">
    <location>
        <begin position="144"/>
        <end position="164"/>
    </location>
</feature>
<feature type="transmembrane region" description="Helical" evidence="1">
    <location>
        <begin position="177"/>
        <end position="197"/>
    </location>
</feature>
<feature type="transmembrane region" description="Helical" evidence="1">
    <location>
        <begin position="201"/>
        <end position="221"/>
    </location>
</feature>
<gene>
    <name type="ORF">SPBC1348.01</name>
</gene>
<protein>
    <recommendedName>
        <fullName>UPF0494 membrane protein C1348.01</fullName>
    </recommendedName>
</protein>
<dbReference type="EMBL" id="CU329671">
    <property type="protein sequence ID" value="CAB94268.1"/>
    <property type="molecule type" value="Genomic_DNA"/>
</dbReference>
<dbReference type="RefSeq" id="NP_592763.1">
    <property type="nucleotide sequence ID" value="NM_001020926.2"/>
</dbReference>
<dbReference type="RefSeq" id="XP_001713154.1">
    <property type="nucleotide sequence ID" value="XM_001713102.2"/>
</dbReference>
<dbReference type="SMR" id="P0CS86"/>
<dbReference type="BioGRID" id="277923">
    <property type="interactions" value="25"/>
</dbReference>
<dbReference type="BioGRID" id="279523">
    <property type="interactions" value="44"/>
</dbReference>
<dbReference type="STRING" id="284812.P0CS86"/>
<dbReference type="iPTMnet" id="P0CS86"/>
<dbReference type="PaxDb" id="4896-SPBC1348.01.1"/>
<dbReference type="EnsemblFungi" id="SPBC1348.01.1">
    <property type="protein sequence ID" value="SPBC1348.01.1:pep"/>
    <property type="gene ID" value="SPBC1348.01"/>
</dbReference>
<dbReference type="EnsemblFungi" id="SPBCPT2R1.01c.1">
    <property type="protein sequence ID" value="SPBCPT2R1.01c.1:pep"/>
    <property type="gene ID" value="SPBCPT2R1.01c"/>
</dbReference>
<dbReference type="KEGG" id="spo:2543090"/>
<dbReference type="PomBase" id="SPBC1348.01"/>
<dbReference type="VEuPathDB" id="FungiDB:SPBC1348.01"/>
<dbReference type="VEuPathDB" id="FungiDB:SPBCPT2R1.01c"/>
<dbReference type="HOGENOM" id="CLU_097271_0_0_1"/>
<dbReference type="InParanoid" id="P0CS86"/>
<dbReference type="PhylomeDB" id="P0CS86"/>
<dbReference type="PRO" id="PR:P0CS86"/>
<dbReference type="Proteomes" id="UP000002485">
    <property type="component" value="Chromosome II"/>
</dbReference>
<dbReference type="GO" id="GO:0000324">
    <property type="term" value="C:fungal-type vacuole"/>
    <property type="evidence" value="ECO:0007005"/>
    <property type="project" value="PomBase"/>
</dbReference>
<dbReference type="GO" id="GO:0005774">
    <property type="term" value="C:vacuolar membrane"/>
    <property type="evidence" value="ECO:0007669"/>
    <property type="project" value="UniProtKB-SubCell"/>
</dbReference>
<dbReference type="InterPro" id="IPR009340">
    <property type="entry name" value="DUF999"/>
</dbReference>
<dbReference type="Pfam" id="PF06198">
    <property type="entry name" value="DUF999"/>
    <property type="match status" value="1"/>
</dbReference>
<organism>
    <name type="scientific">Schizosaccharomyces pombe (strain 972 / ATCC 24843)</name>
    <name type="common">Fission yeast</name>
    <dbReference type="NCBI Taxonomy" id="284812"/>
    <lineage>
        <taxon>Eukaryota</taxon>
        <taxon>Fungi</taxon>
        <taxon>Dikarya</taxon>
        <taxon>Ascomycota</taxon>
        <taxon>Taphrinomycotina</taxon>
        <taxon>Schizosaccharomycetes</taxon>
        <taxon>Schizosaccharomycetales</taxon>
        <taxon>Schizosaccharomycetaceae</taxon>
        <taxon>Schizosaccharomyces</taxon>
    </lineage>
</organism>
<name>YI41_SCHPO</name>